<accession>P69874</accession>
<accession>P23858</accession>
<name>POTA_ECOLI</name>
<organism>
    <name type="scientific">Escherichia coli (strain K12)</name>
    <dbReference type="NCBI Taxonomy" id="83333"/>
    <lineage>
        <taxon>Bacteria</taxon>
        <taxon>Pseudomonadati</taxon>
        <taxon>Pseudomonadota</taxon>
        <taxon>Gammaproteobacteria</taxon>
        <taxon>Enterobacterales</taxon>
        <taxon>Enterobacteriaceae</taxon>
        <taxon>Escherichia</taxon>
    </lineage>
</organism>
<gene>
    <name evidence="1" type="primary">potA</name>
    <name type="ordered locus">b1126</name>
    <name type="ordered locus">JW1112</name>
</gene>
<protein>
    <recommendedName>
        <fullName evidence="1">Spermidine/putrescine import ATP-binding protein PotA</fullName>
        <ecNumber evidence="1">7.6.2.11</ecNumber>
    </recommendedName>
</protein>
<keyword id="KW-0002">3D-structure</keyword>
<keyword id="KW-0067">ATP-binding</keyword>
<keyword id="KW-0997">Cell inner membrane</keyword>
<keyword id="KW-1003">Cell membrane</keyword>
<keyword id="KW-0903">Direct protein sequencing</keyword>
<keyword id="KW-0472">Membrane</keyword>
<keyword id="KW-0547">Nucleotide-binding</keyword>
<keyword id="KW-1185">Reference proteome</keyword>
<keyword id="KW-1278">Translocase</keyword>
<keyword id="KW-0813">Transport</keyword>
<proteinExistence type="evidence at protein level"/>
<comment type="function">
    <text evidence="1 3 4 6">Part of the ABC transporter complex PotABCD involved in spermidine/putrescine import. Responsible for energy coupling to the transport system.</text>
</comment>
<comment type="catalytic activity">
    <reaction evidence="1">
        <text>ATP + H2O + polyamine-[polyamine-binding protein]Side 1 = ADP + phosphate + polyamineSide 2 + [polyamine-binding protein]Side 1.</text>
        <dbReference type="EC" id="7.6.2.11"/>
    </reaction>
</comment>
<comment type="activity regulation">
    <text evidence="2 4 5 6">Strongly inhibited by carbonyl cyanide m-chlorophenylhydrazone (CCCP), and by spermidine via its interaction with the C-terminus. Also inhibited by N-ethylmaleimide and p-chloromercuribenzoic acid. Partially inhibited by KCN.</text>
</comment>
<comment type="biophysicochemical properties">
    <kinetics>
        <KM evidence="2 5">385 uM for ATP</KM>
        <Vmax evidence="2 5">400.0 nmol/min/mg enzyme</Vmax>
    </kinetics>
</comment>
<comment type="subunit">
    <text evidence="1">The complex is composed of two ATP-binding proteins (PotA), two transmembrane proteins (PotB and PotC) and a solute-binding protein (PotD).</text>
</comment>
<comment type="subcellular location">
    <subcellularLocation>
        <location evidence="1 3 5">Cell inner membrane</location>
        <topology evidence="1 3 5">Peripheral membrane protein</topology>
    </subcellularLocation>
</comment>
<comment type="induction">
    <text evidence="7">Transcription is inhibited by PotD precursor, probably only when excess amounts of PotD are produced.</text>
</comment>
<comment type="PTM">
    <text evidence="8">The N-terminus is blocked.</text>
</comment>
<comment type="similarity">
    <text evidence="1">Belongs to the ABC transporter superfamily. Spermidine/putrescine importer (TC 3.A.1.11.1) family.</text>
</comment>
<evidence type="ECO:0000255" key="1">
    <source>
        <dbReference type="HAMAP-Rule" id="MF_01726"/>
    </source>
</evidence>
<evidence type="ECO:0000269" key="2">
    <source>
    </source>
</evidence>
<evidence type="ECO:0000269" key="3">
    <source>
    </source>
</evidence>
<evidence type="ECO:0000269" key="4">
    <source>
    </source>
</evidence>
<evidence type="ECO:0000269" key="5">
    <source>
    </source>
</evidence>
<evidence type="ECO:0000269" key="6">
    <source>
    </source>
</evidence>
<evidence type="ECO:0000269" key="7">
    <source>
    </source>
</evidence>
<evidence type="ECO:0000305" key="8"/>
<sequence>MGQSKKLNKQPSSLSPLVQLAGIRKCFDGKEVIPQLDLTINNGEFLTLLGPSGCGKTTVLRLIAGLETVDSGRIMLDNEDITHVPAENRYVNTVFQSYALFPHMTVFENVAFGLRMQKTPAAEITPRVMEALRMVQLETFAQRKPHQLSGGQQQRVAIARAVVNKPRLLLLDESLSALDYKLRKQMQNELKALQRKLGITFVFVTHDQEEALTMSDRIVVMRDGRIEQDGTPREIYEEPKNLFVAGFIGEINMFNATVIERLDEQRVRANVEGRECNIYVNFAVEPGQKLHVLLRPEDLRVEEINDDNHAEGLIGYVRERNYKGMTLESVVELENGKMVMVSEFFNEDDPDFDHSLDQKMAINWVESWEVVLADEEHK</sequence>
<reference key="1">
    <citation type="journal article" date="1991" name="J. Biol. Chem.">
        <title>Characteristics of the gene for a spermidine and putrescine transport system that maps at 15 min on the Escherichia coli chromosome.</title>
        <authorList>
            <person name="Furuchi T."/>
            <person name="Kashiwagi K."/>
            <person name="Kobayashi H."/>
            <person name="Igarashi K."/>
        </authorList>
    </citation>
    <scope>NUCLEOTIDE SEQUENCE [GENOMIC DNA]</scope>
    <scope>FUNCTION IN SPERMIDINE AND PUTRESCINE TRANSPORT</scope>
    <scope>SUBCELLULAR LOCATION</scope>
    <source>
        <strain>K12</strain>
    </source>
</reference>
<reference key="2">
    <citation type="journal article" date="1996" name="DNA Res.">
        <title>A 718-kb DNA sequence of the Escherichia coli K-12 genome corresponding to the 12.7-28.0 min region on the linkage map.</title>
        <authorList>
            <person name="Oshima T."/>
            <person name="Aiba H."/>
            <person name="Baba T."/>
            <person name="Fujita K."/>
            <person name="Hayashi K."/>
            <person name="Honjo A."/>
            <person name="Ikemoto K."/>
            <person name="Inada T."/>
            <person name="Itoh T."/>
            <person name="Kajihara M."/>
            <person name="Kanai K."/>
            <person name="Kashimoto K."/>
            <person name="Kimura S."/>
            <person name="Kitagawa M."/>
            <person name="Makino K."/>
            <person name="Masuda S."/>
            <person name="Miki T."/>
            <person name="Mizobuchi K."/>
            <person name="Mori H."/>
            <person name="Motomura K."/>
            <person name="Nakamura Y."/>
            <person name="Nashimoto H."/>
            <person name="Nishio Y."/>
            <person name="Saito N."/>
            <person name="Sampei G."/>
            <person name="Seki Y."/>
            <person name="Tagami H."/>
            <person name="Takemoto K."/>
            <person name="Wada C."/>
            <person name="Yamamoto Y."/>
            <person name="Yano M."/>
            <person name="Horiuchi T."/>
        </authorList>
    </citation>
    <scope>NUCLEOTIDE SEQUENCE [LARGE SCALE GENOMIC DNA]</scope>
    <source>
        <strain>K12 / W3110 / ATCC 27325 / DSM 5911</strain>
    </source>
</reference>
<reference key="3">
    <citation type="journal article" date="1997" name="Science">
        <title>The complete genome sequence of Escherichia coli K-12.</title>
        <authorList>
            <person name="Blattner F.R."/>
            <person name="Plunkett G. III"/>
            <person name="Bloch C.A."/>
            <person name="Perna N.T."/>
            <person name="Burland V."/>
            <person name="Riley M."/>
            <person name="Collado-Vides J."/>
            <person name="Glasner J.D."/>
            <person name="Rode C.K."/>
            <person name="Mayhew G.F."/>
            <person name="Gregor J."/>
            <person name="Davis N.W."/>
            <person name="Kirkpatrick H.A."/>
            <person name="Goeden M.A."/>
            <person name="Rose D.J."/>
            <person name="Mau B."/>
            <person name="Shao Y."/>
        </authorList>
    </citation>
    <scope>NUCLEOTIDE SEQUENCE [LARGE SCALE GENOMIC DNA]</scope>
    <source>
        <strain>K12 / MG1655 / ATCC 47076</strain>
    </source>
</reference>
<reference key="4">
    <citation type="journal article" date="2006" name="Mol. Syst. Biol.">
        <title>Highly accurate genome sequences of Escherichia coli K-12 strains MG1655 and W3110.</title>
        <authorList>
            <person name="Hayashi K."/>
            <person name="Morooka N."/>
            <person name="Yamamoto Y."/>
            <person name="Fujita K."/>
            <person name="Isono K."/>
            <person name="Choi S."/>
            <person name="Ohtsubo E."/>
            <person name="Baba T."/>
            <person name="Wanner B.L."/>
            <person name="Mori H."/>
            <person name="Horiuchi T."/>
        </authorList>
    </citation>
    <scope>NUCLEOTIDE SEQUENCE [LARGE SCALE GENOMIC DNA]</scope>
    <source>
        <strain>K12 / W3110 / ATCC 27325 / DSM 5911</strain>
    </source>
</reference>
<reference key="5">
    <citation type="journal article" date="1995" name="J. Biol. Chem.">
        <title>Spermidine-preferential uptake system in Escherichia coli. ATP hydrolysis by PotA protein and its association with membranes.</title>
        <authorList>
            <person name="Kashiwagi K."/>
            <person name="Endo H."/>
            <person name="Kobayashi H."/>
            <person name="Takio K."/>
            <person name="Igarashi K."/>
        </authorList>
    </citation>
    <scope>PROTEIN SEQUENCE OF 27-30 AND 360-378</scope>
    <scope>BIOPHYSICOCHEMICAL PROPERTIES</scope>
    <scope>ATPASE ACTIVITY</scope>
    <scope>ACTIVITY REGULATION</scope>
    <scope>SUBCELLULAR LOCATION</scope>
    <scope>MUTAGENESIS OF CYS-26; CYS-54 AND CYS-276</scope>
    <source>
        <strain>K12</strain>
    </source>
</reference>
<reference key="6">
    <citation type="journal article" date="1990" name="J. Biol. Chem.">
        <title>Isolation of polyamine transport-deficient mutants of Escherichia coli and cloning of the genes for polyamine transport proteins.</title>
        <authorList>
            <person name="Kashiwagi K."/>
            <person name="Hosokawa N."/>
            <person name="Furuchi T."/>
            <person name="Kobayashi H."/>
            <person name="Sasakawa C."/>
            <person name="Yoshikawa M."/>
            <person name="Igarashi K."/>
        </authorList>
    </citation>
    <scope>FUNCTION IN SPERMIDINE AND PUTRESCINE TRANSPORT</scope>
    <scope>ATPASE ACTIVITY</scope>
    <scope>ACTIVITY REGULATION</scope>
    <source>
        <strain>K12 / W3110 / ATCC 27325 / DSM 5911</strain>
    </source>
</reference>
<reference key="7">
    <citation type="journal article" date="1993" name="J. Biol. Chem.">
        <title>Functions of potA and potD proteins in spermidine-preferential uptake system in Escherichia coli.</title>
        <authorList>
            <person name="Kashiwagi K."/>
            <person name="Miyamoto S."/>
            <person name="Nukui E."/>
            <person name="Kobayashi H."/>
            <person name="Igarashi K."/>
        </authorList>
    </citation>
    <scope>FUNCTION IN SPERMIDINE TRANSPORT</scope>
    <scope>ATPASE ACTIVITY</scope>
    <scope>ACTIVITY REGULATION</scope>
    <scope>MUTAGENESIS OF VAL-135</scope>
    <source>
        <strain>K12 / W3110 / ATCC 27325 / DSM 5911</strain>
    </source>
</reference>
<reference key="8">
    <citation type="journal article" date="1999" name="J. Biol. Chem.">
        <title>Transcriptional inhibition of the operon for the spermidine uptake system by the substrate-binding protein PotD.</title>
        <authorList>
            <person name="Antognoni F."/>
            <person name="Del Duca S."/>
            <person name="Kuraishi A."/>
            <person name="Kawabe E."/>
            <person name="Fukuchi-Shimogori T."/>
            <person name="Kashiwagi K."/>
            <person name="Igarashi K."/>
        </authorList>
    </citation>
    <scope>TRANSCRIPTIONAL REGULATION BY POTD</scope>
    <source>
        <strain>K12</strain>
    </source>
</reference>
<reference key="9">
    <citation type="journal article" date="2002" name="J. Biol. Chem.">
        <title>The ATPase activity and the functional domain of PotA, a component of the spermidine-preferential uptake system in Escherichia coli.</title>
        <authorList>
            <person name="Kashiwagi K."/>
            <person name="Innami A."/>
            <person name="Zenda R."/>
            <person name="Tomitori H."/>
            <person name="Igarashi K."/>
        </authorList>
    </citation>
    <scope>BIOPHYSICOCHEMICAL PROPERTIES</scope>
    <scope>ATPASE ACTIVITY</scope>
    <scope>ACTIVITY REGULATION</scope>
    <scope>MUTAGENESIS OF PHE-27; PHE-45; LEU-60; LEU-76; VAL-135; ASP-172 AND GLU-297</scope>
    <source>
        <strain>K12</strain>
    </source>
</reference>
<dbReference type="EC" id="7.6.2.11" evidence="1"/>
<dbReference type="EMBL" id="M64519">
    <property type="protein sequence ID" value="AAC37038.1"/>
    <property type="molecule type" value="Genomic_DNA"/>
</dbReference>
<dbReference type="EMBL" id="U00096">
    <property type="protein sequence ID" value="AAC74210.1"/>
    <property type="molecule type" value="Genomic_DNA"/>
</dbReference>
<dbReference type="EMBL" id="AP009048">
    <property type="protein sequence ID" value="BAA35946.2"/>
    <property type="molecule type" value="Genomic_DNA"/>
</dbReference>
<dbReference type="PIR" id="A40840">
    <property type="entry name" value="A40840"/>
</dbReference>
<dbReference type="RefSeq" id="NP_415644.1">
    <property type="nucleotide sequence ID" value="NC_000913.3"/>
</dbReference>
<dbReference type="RefSeq" id="WP_000531594.1">
    <property type="nucleotide sequence ID" value="NZ_SSZK01000010.1"/>
</dbReference>
<dbReference type="PDB" id="8Y5F">
    <property type="method" value="EM"/>
    <property type="resolution" value="3.13 A"/>
    <property type="chains" value="A/D=1-378"/>
</dbReference>
<dbReference type="PDB" id="8Y5H">
    <property type="method" value="EM"/>
    <property type="resolution" value="3.10 A"/>
    <property type="chains" value="A/D=1-378"/>
</dbReference>
<dbReference type="PDB" id="8Y5I">
    <property type="method" value="EM"/>
    <property type="resolution" value="3.00 A"/>
    <property type="chains" value="A/D=1-378"/>
</dbReference>
<dbReference type="PDB" id="8ZX1">
    <property type="method" value="EM"/>
    <property type="resolution" value="3.50 A"/>
    <property type="chains" value="A/D=1-378"/>
</dbReference>
<dbReference type="PDBsum" id="8Y5F"/>
<dbReference type="PDBsum" id="8Y5H"/>
<dbReference type="PDBsum" id="8Y5I"/>
<dbReference type="PDBsum" id="8ZX1"/>
<dbReference type="EMDB" id="EMD-38933"/>
<dbReference type="EMDB" id="EMD-38936"/>
<dbReference type="SMR" id="P69874"/>
<dbReference type="BioGRID" id="4261674">
    <property type="interactions" value="17"/>
</dbReference>
<dbReference type="BioGRID" id="850680">
    <property type="interactions" value="1"/>
</dbReference>
<dbReference type="ComplexPortal" id="CPX-4383">
    <property type="entry name" value="Spermidine ABC transporter complex"/>
</dbReference>
<dbReference type="FunCoup" id="P69874">
    <property type="interactions" value="481"/>
</dbReference>
<dbReference type="IntAct" id="P69874">
    <property type="interactions" value="2"/>
</dbReference>
<dbReference type="STRING" id="511145.b1126"/>
<dbReference type="TCDB" id="3.A.1.11.1">
    <property type="family name" value="the atp-binding cassette (abc) superfamily"/>
</dbReference>
<dbReference type="jPOST" id="P69874"/>
<dbReference type="PaxDb" id="511145-b1126"/>
<dbReference type="EnsemblBacteria" id="AAC74210">
    <property type="protein sequence ID" value="AAC74210"/>
    <property type="gene ID" value="b1126"/>
</dbReference>
<dbReference type="GeneID" id="75203712"/>
<dbReference type="GeneID" id="946323"/>
<dbReference type="KEGG" id="ecj:JW1112"/>
<dbReference type="KEGG" id="eco:b1126"/>
<dbReference type="KEGG" id="ecoc:C3026_06775"/>
<dbReference type="PATRIC" id="fig|1411691.4.peg.1141"/>
<dbReference type="EchoBASE" id="EB0742"/>
<dbReference type="eggNOG" id="COG3842">
    <property type="taxonomic scope" value="Bacteria"/>
</dbReference>
<dbReference type="InParanoid" id="P69874"/>
<dbReference type="OMA" id="HVMRFGE"/>
<dbReference type="OrthoDB" id="9802264at2"/>
<dbReference type="PhylomeDB" id="P69874"/>
<dbReference type="BioCyc" id="EcoCyc:POTA-MONOMER"/>
<dbReference type="BioCyc" id="MetaCyc:POTA-MONOMER"/>
<dbReference type="SABIO-RK" id="P69874"/>
<dbReference type="PRO" id="PR:P69874"/>
<dbReference type="Proteomes" id="UP000000625">
    <property type="component" value="Chromosome"/>
</dbReference>
<dbReference type="GO" id="GO:0043190">
    <property type="term" value="C:ATP-binding cassette (ABC) transporter complex"/>
    <property type="evidence" value="ECO:0000304"/>
    <property type="project" value="EcoCyc"/>
</dbReference>
<dbReference type="GO" id="GO:0016020">
    <property type="term" value="C:membrane"/>
    <property type="evidence" value="ECO:0000303"/>
    <property type="project" value="ComplexPortal"/>
</dbReference>
<dbReference type="GO" id="GO:0005886">
    <property type="term" value="C:plasma membrane"/>
    <property type="evidence" value="ECO:0000314"/>
    <property type="project" value="EcoCyc"/>
</dbReference>
<dbReference type="GO" id="GO:0015417">
    <property type="term" value="F:ABC-type polyamine transporter activity"/>
    <property type="evidence" value="ECO:0000314"/>
    <property type="project" value="EcoCyc"/>
</dbReference>
<dbReference type="GO" id="GO:0015594">
    <property type="term" value="F:ABC-type putrescine transporter activity"/>
    <property type="evidence" value="ECO:0007669"/>
    <property type="project" value="InterPro"/>
</dbReference>
<dbReference type="GO" id="GO:0005524">
    <property type="term" value="F:ATP binding"/>
    <property type="evidence" value="ECO:0000314"/>
    <property type="project" value="EcoCyc"/>
</dbReference>
<dbReference type="GO" id="GO:0016887">
    <property type="term" value="F:ATP hydrolysis activity"/>
    <property type="evidence" value="ECO:0000314"/>
    <property type="project" value="EcoCyc"/>
</dbReference>
<dbReference type="GO" id="GO:0000166">
    <property type="term" value="F:nucleotide binding"/>
    <property type="evidence" value="ECO:0000314"/>
    <property type="project" value="EcoCyc"/>
</dbReference>
<dbReference type="GO" id="GO:0015847">
    <property type="term" value="P:putrescine transport"/>
    <property type="evidence" value="ECO:0000314"/>
    <property type="project" value="EcoCyc"/>
</dbReference>
<dbReference type="GO" id="GO:1903711">
    <property type="term" value="P:spermidine transmembrane transport"/>
    <property type="evidence" value="ECO:0000314"/>
    <property type="project" value="EcoCyc"/>
</dbReference>
<dbReference type="CDD" id="cd03300">
    <property type="entry name" value="ABC_PotA_N"/>
    <property type="match status" value="1"/>
</dbReference>
<dbReference type="FunFam" id="2.40.50.100:FF:000017">
    <property type="entry name" value="Spermidine/putrescine import ATP-binding protein PotA"/>
    <property type="match status" value="1"/>
</dbReference>
<dbReference type="FunFam" id="3.40.50.300:FF:000133">
    <property type="entry name" value="Spermidine/putrescine import ATP-binding protein PotA"/>
    <property type="match status" value="1"/>
</dbReference>
<dbReference type="Gene3D" id="2.40.50.100">
    <property type="match status" value="1"/>
</dbReference>
<dbReference type="Gene3D" id="3.40.50.300">
    <property type="entry name" value="P-loop containing nucleotide triphosphate hydrolases"/>
    <property type="match status" value="1"/>
</dbReference>
<dbReference type="InterPro" id="IPR003593">
    <property type="entry name" value="AAA+_ATPase"/>
</dbReference>
<dbReference type="InterPro" id="IPR050093">
    <property type="entry name" value="ABC_SmlMolc_Importer"/>
</dbReference>
<dbReference type="InterPro" id="IPR003439">
    <property type="entry name" value="ABC_transporter-like_ATP-bd"/>
</dbReference>
<dbReference type="InterPro" id="IPR017871">
    <property type="entry name" value="ABC_transporter-like_CS"/>
</dbReference>
<dbReference type="InterPro" id="IPR008995">
    <property type="entry name" value="Mo/tungstate-bd_C_term_dom"/>
</dbReference>
<dbReference type="InterPro" id="IPR027417">
    <property type="entry name" value="P-loop_NTPase"/>
</dbReference>
<dbReference type="InterPro" id="IPR005893">
    <property type="entry name" value="PotA-like"/>
</dbReference>
<dbReference type="InterPro" id="IPR017879">
    <property type="entry name" value="PotA_ATP-bd"/>
</dbReference>
<dbReference type="InterPro" id="IPR013611">
    <property type="entry name" value="Transp-assoc_OB_typ2"/>
</dbReference>
<dbReference type="NCBIfam" id="TIGR01187">
    <property type="entry name" value="potA"/>
    <property type="match status" value="1"/>
</dbReference>
<dbReference type="NCBIfam" id="NF006987">
    <property type="entry name" value="PRK09452.1"/>
    <property type="match status" value="1"/>
</dbReference>
<dbReference type="PANTHER" id="PTHR42781">
    <property type="entry name" value="SPERMIDINE/PUTRESCINE IMPORT ATP-BINDING PROTEIN POTA"/>
    <property type="match status" value="1"/>
</dbReference>
<dbReference type="PANTHER" id="PTHR42781:SF4">
    <property type="entry name" value="SPERMIDINE_PUTRESCINE IMPORT ATP-BINDING PROTEIN POTA"/>
    <property type="match status" value="1"/>
</dbReference>
<dbReference type="Pfam" id="PF00005">
    <property type="entry name" value="ABC_tran"/>
    <property type="match status" value="1"/>
</dbReference>
<dbReference type="Pfam" id="PF08402">
    <property type="entry name" value="TOBE_2"/>
    <property type="match status" value="1"/>
</dbReference>
<dbReference type="SMART" id="SM00382">
    <property type="entry name" value="AAA"/>
    <property type="match status" value="1"/>
</dbReference>
<dbReference type="SUPFAM" id="SSF50331">
    <property type="entry name" value="MOP-like"/>
    <property type="match status" value="1"/>
</dbReference>
<dbReference type="SUPFAM" id="SSF52540">
    <property type="entry name" value="P-loop containing nucleoside triphosphate hydrolases"/>
    <property type="match status" value="1"/>
</dbReference>
<dbReference type="PROSITE" id="PS00211">
    <property type="entry name" value="ABC_TRANSPORTER_1"/>
    <property type="match status" value="1"/>
</dbReference>
<dbReference type="PROSITE" id="PS50893">
    <property type="entry name" value="ABC_TRANSPORTER_2"/>
    <property type="match status" value="1"/>
</dbReference>
<dbReference type="PROSITE" id="PS51305">
    <property type="entry name" value="POTA"/>
    <property type="match status" value="1"/>
</dbReference>
<feature type="chain" id="PRO_0000092746" description="Spermidine/putrescine import ATP-binding protein PotA">
    <location>
        <begin position="1"/>
        <end position="378"/>
    </location>
</feature>
<feature type="domain" description="ABC transporter" evidence="1">
    <location>
        <begin position="18"/>
        <end position="248"/>
    </location>
</feature>
<feature type="binding site" evidence="1">
    <location>
        <begin position="50"/>
        <end position="57"/>
    </location>
    <ligand>
        <name>ATP</name>
        <dbReference type="ChEBI" id="CHEBI:30616"/>
    </ligand>
</feature>
<feature type="mutagenesis site" description="Lower ATPase activity and transport efficiency." evidence="5">
    <original>C</original>
    <variation>A</variation>
    <location>
        <position position="26"/>
    </location>
</feature>
<feature type="mutagenesis site" description="Lower ATPase activity and transport efficiency." evidence="2">
    <original>F</original>
    <variation>L</variation>
    <location>
        <position position="27"/>
    </location>
</feature>
<feature type="mutagenesis site" description="Lower ATPase activity and transport efficiency." evidence="2">
    <original>F</original>
    <variation>L</variation>
    <location>
        <position position="45"/>
    </location>
</feature>
<feature type="mutagenesis site" description="Loss of ATPase activity and transport." evidence="5">
    <original>C</original>
    <variation>T</variation>
    <location>
        <position position="54"/>
    </location>
</feature>
<feature type="mutagenesis site" description="Lower ATPase activity and transport efficiency." evidence="2">
    <original>L</original>
    <variation>F</variation>
    <location>
        <position position="60"/>
    </location>
</feature>
<feature type="mutagenesis site" description="Lower ATPase activity and transport efficiency." evidence="2">
    <original>L</original>
    <variation>P</variation>
    <location>
        <position position="76"/>
    </location>
</feature>
<feature type="mutagenesis site" description="Loss of ATPase activity and transport." evidence="2 6">
    <original>V</original>
    <variation>M</variation>
    <location>
        <position position="135"/>
    </location>
</feature>
<feature type="mutagenesis site" description="Loss of ATPase activity and transport." evidence="2">
    <original>D</original>
    <variation>N</variation>
    <location>
        <position position="172"/>
    </location>
</feature>
<feature type="mutagenesis site" description="Lower ATPase activity and transport efficiency." evidence="5">
    <original>C</original>
    <variation>A</variation>
    <location>
        <position position="276"/>
    </location>
</feature>
<feature type="mutagenesis site" description="Lower ATPase activity and transport efficiency." evidence="2">
    <original>E</original>
    <variation>K</variation>
    <variation>D</variation>
    <location>
        <position position="297"/>
    </location>
</feature>
<feature type="mutagenesis site" description="Loss of ATPase activity and transport." evidence="2">
    <original>E</original>
    <variation>Q</variation>
    <location>
        <position position="297"/>
    </location>
</feature>